<accession>Q9PMD4</accession>
<accession>Q0P890</accession>
<comment type="function">
    <text evidence="1">Catalyzes the reversible isomerization of glucose-6-phosphate to fructose-6-phosphate.</text>
</comment>
<comment type="catalytic activity">
    <reaction evidence="1">
        <text>alpha-D-glucose 6-phosphate = beta-D-fructose 6-phosphate</text>
        <dbReference type="Rhea" id="RHEA:11816"/>
        <dbReference type="ChEBI" id="CHEBI:57634"/>
        <dbReference type="ChEBI" id="CHEBI:58225"/>
        <dbReference type="EC" id="5.3.1.9"/>
    </reaction>
</comment>
<comment type="pathway">
    <text evidence="1">Carbohydrate biosynthesis; gluconeogenesis.</text>
</comment>
<comment type="pathway">
    <text evidence="1">Carbohydrate degradation; glycolysis; D-glyceraldehyde 3-phosphate and glycerone phosphate from D-glucose: step 2/4.</text>
</comment>
<comment type="subcellular location">
    <subcellularLocation>
        <location evidence="1">Cytoplasm</location>
    </subcellularLocation>
</comment>
<comment type="similarity">
    <text evidence="1 2">Belongs to the GPI family.</text>
</comment>
<organism>
    <name type="scientific">Campylobacter jejuni subsp. jejuni serotype O:2 (strain ATCC 700819 / NCTC 11168)</name>
    <dbReference type="NCBI Taxonomy" id="192222"/>
    <lineage>
        <taxon>Bacteria</taxon>
        <taxon>Pseudomonadati</taxon>
        <taxon>Campylobacterota</taxon>
        <taxon>Epsilonproteobacteria</taxon>
        <taxon>Campylobacterales</taxon>
        <taxon>Campylobacteraceae</taxon>
        <taxon>Campylobacter</taxon>
    </lineage>
</organism>
<dbReference type="EC" id="5.3.1.9" evidence="1"/>
<dbReference type="EMBL" id="AL111168">
    <property type="protein sequence ID" value="CAL35635.1"/>
    <property type="molecule type" value="Genomic_DNA"/>
</dbReference>
<dbReference type="PIR" id="E81300">
    <property type="entry name" value="E81300"/>
</dbReference>
<dbReference type="RefSeq" id="WP_002855462.1">
    <property type="nucleotide sequence ID" value="NZ_SZUC01000003.1"/>
</dbReference>
<dbReference type="RefSeq" id="YP_002344907.1">
    <property type="nucleotide sequence ID" value="NC_002163.1"/>
</dbReference>
<dbReference type="SMR" id="Q9PMD4"/>
<dbReference type="IntAct" id="Q9PMD4">
    <property type="interactions" value="47"/>
</dbReference>
<dbReference type="STRING" id="192222.Cj1535c"/>
<dbReference type="PaxDb" id="192222-Cj1535c"/>
<dbReference type="EnsemblBacteria" id="CAL35635">
    <property type="protein sequence ID" value="CAL35635"/>
    <property type="gene ID" value="Cj1535c"/>
</dbReference>
<dbReference type="GeneID" id="905817"/>
<dbReference type="KEGG" id="cje:Cj1535c"/>
<dbReference type="PATRIC" id="fig|192222.6.peg.1512"/>
<dbReference type="eggNOG" id="COG0166">
    <property type="taxonomic scope" value="Bacteria"/>
</dbReference>
<dbReference type="HOGENOM" id="CLU_037303_1_0_7"/>
<dbReference type="OrthoDB" id="140919at2"/>
<dbReference type="UniPathway" id="UPA00109">
    <property type="reaction ID" value="UER00181"/>
</dbReference>
<dbReference type="UniPathway" id="UPA00138"/>
<dbReference type="Proteomes" id="UP000000799">
    <property type="component" value="Chromosome"/>
</dbReference>
<dbReference type="GO" id="GO:0005829">
    <property type="term" value="C:cytosol"/>
    <property type="evidence" value="ECO:0007669"/>
    <property type="project" value="TreeGrafter"/>
</dbReference>
<dbReference type="GO" id="GO:0097367">
    <property type="term" value="F:carbohydrate derivative binding"/>
    <property type="evidence" value="ECO:0007669"/>
    <property type="project" value="InterPro"/>
</dbReference>
<dbReference type="GO" id="GO:0004347">
    <property type="term" value="F:glucose-6-phosphate isomerase activity"/>
    <property type="evidence" value="ECO:0007669"/>
    <property type="project" value="UniProtKB-UniRule"/>
</dbReference>
<dbReference type="GO" id="GO:0048029">
    <property type="term" value="F:monosaccharide binding"/>
    <property type="evidence" value="ECO:0007669"/>
    <property type="project" value="TreeGrafter"/>
</dbReference>
<dbReference type="GO" id="GO:0006094">
    <property type="term" value="P:gluconeogenesis"/>
    <property type="evidence" value="ECO:0007669"/>
    <property type="project" value="UniProtKB-UniRule"/>
</dbReference>
<dbReference type="GO" id="GO:0051156">
    <property type="term" value="P:glucose 6-phosphate metabolic process"/>
    <property type="evidence" value="ECO:0007669"/>
    <property type="project" value="TreeGrafter"/>
</dbReference>
<dbReference type="GO" id="GO:0006096">
    <property type="term" value="P:glycolytic process"/>
    <property type="evidence" value="ECO:0007669"/>
    <property type="project" value="UniProtKB-UniRule"/>
</dbReference>
<dbReference type="CDD" id="cd05015">
    <property type="entry name" value="SIS_PGI_1"/>
    <property type="match status" value="1"/>
</dbReference>
<dbReference type="CDD" id="cd05016">
    <property type="entry name" value="SIS_PGI_2"/>
    <property type="match status" value="1"/>
</dbReference>
<dbReference type="Gene3D" id="3.40.50.10490">
    <property type="entry name" value="Glucose-6-phosphate isomerase like protein, domain 1"/>
    <property type="match status" value="2"/>
</dbReference>
<dbReference type="HAMAP" id="MF_00473">
    <property type="entry name" value="G6P_isomerase"/>
    <property type="match status" value="1"/>
</dbReference>
<dbReference type="InterPro" id="IPR001672">
    <property type="entry name" value="G6P_Isomerase"/>
</dbReference>
<dbReference type="InterPro" id="IPR018189">
    <property type="entry name" value="Phosphoglucose_isomerase_CS"/>
</dbReference>
<dbReference type="InterPro" id="IPR046348">
    <property type="entry name" value="SIS_dom_sf"/>
</dbReference>
<dbReference type="InterPro" id="IPR035476">
    <property type="entry name" value="SIS_PGI_1"/>
</dbReference>
<dbReference type="InterPro" id="IPR035482">
    <property type="entry name" value="SIS_PGI_2"/>
</dbReference>
<dbReference type="NCBIfam" id="NF003016">
    <property type="entry name" value="PRK03868.1"/>
    <property type="match status" value="1"/>
</dbReference>
<dbReference type="PANTHER" id="PTHR11469">
    <property type="entry name" value="GLUCOSE-6-PHOSPHATE ISOMERASE"/>
    <property type="match status" value="1"/>
</dbReference>
<dbReference type="PANTHER" id="PTHR11469:SF1">
    <property type="entry name" value="GLUCOSE-6-PHOSPHATE ISOMERASE"/>
    <property type="match status" value="1"/>
</dbReference>
<dbReference type="Pfam" id="PF00342">
    <property type="entry name" value="PGI"/>
    <property type="match status" value="1"/>
</dbReference>
<dbReference type="PRINTS" id="PR00662">
    <property type="entry name" value="G6PISOMERASE"/>
</dbReference>
<dbReference type="SUPFAM" id="SSF53697">
    <property type="entry name" value="SIS domain"/>
    <property type="match status" value="1"/>
</dbReference>
<dbReference type="PROSITE" id="PS00765">
    <property type="entry name" value="P_GLUCOSE_ISOMERASE_1"/>
    <property type="match status" value="1"/>
</dbReference>
<dbReference type="PROSITE" id="PS00174">
    <property type="entry name" value="P_GLUCOSE_ISOMERASE_2"/>
    <property type="match status" value="1"/>
</dbReference>
<dbReference type="PROSITE" id="PS51463">
    <property type="entry name" value="P_GLUCOSE_ISOMERASE_3"/>
    <property type="match status" value="1"/>
</dbReference>
<name>G6PI_CAMJE</name>
<reference key="1">
    <citation type="journal article" date="2000" name="Nature">
        <title>The genome sequence of the food-borne pathogen Campylobacter jejuni reveals hypervariable sequences.</title>
        <authorList>
            <person name="Parkhill J."/>
            <person name="Wren B.W."/>
            <person name="Mungall K.L."/>
            <person name="Ketley J.M."/>
            <person name="Churcher C.M."/>
            <person name="Basham D."/>
            <person name="Chillingworth T."/>
            <person name="Davies R.M."/>
            <person name="Feltwell T."/>
            <person name="Holroyd S."/>
            <person name="Jagels K."/>
            <person name="Karlyshev A.V."/>
            <person name="Moule S."/>
            <person name="Pallen M.J."/>
            <person name="Penn C.W."/>
            <person name="Quail M.A."/>
            <person name="Rajandream M.A."/>
            <person name="Rutherford K.M."/>
            <person name="van Vliet A.H.M."/>
            <person name="Whitehead S."/>
            <person name="Barrell B.G."/>
        </authorList>
    </citation>
    <scope>NUCLEOTIDE SEQUENCE [LARGE SCALE GENOMIC DNA]</scope>
    <source>
        <strain>ATCC 700819 / NCTC 11168</strain>
    </source>
</reference>
<evidence type="ECO:0000255" key="1">
    <source>
        <dbReference type="HAMAP-Rule" id="MF_00473"/>
    </source>
</evidence>
<evidence type="ECO:0000305" key="2"/>
<sequence length="406" mass="46013">MLNNTLFFKQSEIHTISSYANRINDEVKSGDIGYYHLIDTSLNLIDESLQFIQDKEYVKNIVLVGMGGSSCGVKALRDMLFNEKSNQRELFILDNTSSHSFNKTLEKIKLEESLFLIISKTGSTIEVVSLFKLLIEHFKLDMQELKKYFVFITDKDSKLHQEGENLGIKCFFIPANVGGRFSILSAVGIVPLCFCGYNAKALLEGAKACFEDFFTHKKDEILQKAYHYCTHKNANINVLFSYSDAFKGFNEWYIQLIAESLGKKQGYKRIGLTPIALIGARDQHSFLQLIMDGPKNKTVTFLKIKDAQKAPIIPDIHFKFLDSLSNKVNLHELLNAQCDATMHALIAENLSVDVIELEKLDAWHAGYLMYYYELFTSTCGVMLGINTYDQPGVEVGKLILKNILNS</sequence>
<proteinExistence type="inferred from homology"/>
<feature type="chain" id="PRO_0000180616" description="Glucose-6-phosphate isomerase">
    <location>
        <begin position="1"/>
        <end position="406"/>
    </location>
</feature>
<feature type="active site" description="Proton donor" evidence="1">
    <location>
        <position position="259"/>
    </location>
</feature>
<feature type="active site" evidence="1">
    <location>
        <position position="284"/>
    </location>
</feature>
<feature type="active site" evidence="1">
    <location>
        <position position="397"/>
    </location>
</feature>
<keyword id="KW-0963">Cytoplasm</keyword>
<keyword id="KW-0312">Gluconeogenesis</keyword>
<keyword id="KW-0324">Glycolysis</keyword>
<keyword id="KW-0413">Isomerase</keyword>
<keyword id="KW-1185">Reference proteome</keyword>
<gene>
    <name evidence="1" type="primary">pgi</name>
    <name type="ordered locus">Cj1535c</name>
</gene>
<protein>
    <recommendedName>
        <fullName evidence="1">Glucose-6-phosphate isomerase</fullName>
        <shortName evidence="1">GPI</shortName>
        <ecNumber evidence="1">5.3.1.9</ecNumber>
    </recommendedName>
    <alternativeName>
        <fullName evidence="1">Phosphoglucose isomerase</fullName>
        <shortName evidence="1">PGI</shortName>
    </alternativeName>
    <alternativeName>
        <fullName evidence="1">Phosphohexose isomerase</fullName>
        <shortName evidence="1">PHI</shortName>
    </alternativeName>
</protein>